<proteinExistence type="inferred from homology"/>
<sequence>MMDVLMYLFETYIHSDVELNVEQEKLEDELLKAGFHQEAVYKALDWLEDLARLQDTDEHARVATGTSTSMRIYTQQEIDGINTVCRGFLLFLEQIKVLTSETREMVIEQVMALETDELSLDDLKWVVLMVLFNVPGQESAYTQMEELLYTSDVGLTH</sequence>
<dbReference type="EMBL" id="CP000020">
    <property type="protein sequence ID" value="AAW87035.1"/>
    <property type="molecule type" value="Genomic_DNA"/>
</dbReference>
<dbReference type="RefSeq" id="WP_011262882.1">
    <property type="nucleotide sequence ID" value="NC_006840.2"/>
</dbReference>
<dbReference type="RefSeq" id="YP_205923.1">
    <property type="nucleotide sequence ID" value="NC_006840.2"/>
</dbReference>
<dbReference type="SMR" id="Q5E1R1"/>
<dbReference type="STRING" id="312309.VF_2540"/>
<dbReference type="EnsemblBacteria" id="AAW87035">
    <property type="protein sequence ID" value="AAW87035"/>
    <property type="gene ID" value="VF_2540"/>
</dbReference>
<dbReference type="GeneID" id="54165290"/>
<dbReference type="KEGG" id="vfi:VF_2540"/>
<dbReference type="PATRIC" id="fig|312309.11.peg.2566"/>
<dbReference type="eggNOG" id="COG2922">
    <property type="taxonomic scope" value="Bacteria"/>
</dbReference>
<dbReference type="HOGENOM" id="CLU_133242_0_0_6"/>
<dbReference type="OrthoDB" id="9788984at2"/>
<dbReference type="Proteomes" id="UP000000537">
    <property type="component" value="Chromosome I"/>
</dbReference>
<dbReference type="HAMAP" id="MF_00598">
    <property type="entry name" value="Smg"/>
    <property type="match status" value="1"/>
</dbReference>
<dbReference type="InterPro" id="IPR007456">
    <property type="entry name" value="Smg"/>
</dbReference>
<dbReference type="NCBIfam" id="NF002897">
    <property type="entry name" value="PRK03430.1"/>
    <property type="match status" value="1"/>
</dbReference>
<dbReference type="PANTHER" id="PTHR38692">
    <property type="entry name" value="PROTEIN SMG"/>
    <property type="match status" value="1"/>
</dbReference>
<dbReference type="PANTHER" id="PTHR38692:SF1">
    <property type="entry name" value="PROTEIN SMG"/>
    <property type="match status" value="1"/>
</dbReference>
<dbReference type="Pfam" id="PF04361">
    <property type="entry name" value="DUF494"/>
    <property type="match status" value="1"/>
</dbReference>
<accession>Q5E1R1</accession>
<comment type="similarity">
    <text evidence="1">Belongs to the Smg family.</text>
</comment>
<name>SMG_ALIF1</name>
<evidence type="ECO:0000255" key="1">
    <source>
        <dbReference type="HAMAP-Rule" id="MF_00598"/>
    </source>
</evidence>
<feature type="chain" id="PRO_0000209184" description="Protein Smg homolog">
    <location>
        <begin position="1"/>
        <end position="157"/>
    </location>
</feature>
<organism>
    <name type="scientific">Aliivibrio fischeri (strain ATCC 700601 / ES114)</name>
    <name type="common">Vibrio fischeri</name>
    <dbReference type="NCBI Taxonomy" id="312309"/>
    <lineage>
        <taxon>Bacteria</taxon>
        <taxon>Pseudomonadati</taxon>
        <taxon>Pseudomonadota</taxon>
        <taxon>Gammaproteobacteria</taxon>
        <taxon>Vibrionales</taxon>
        <taxon>Vibrionaceae</taxon>
        <taxon>Aliivibrio</taxon>
    </lineage>
</organism>
<protein>
    <recommendedName>
        <fullName evidence="1">Protein Smg homolog</fullName>
    </recommendedName>
</protein>
<keyword id="KW-1185">Reference proteome</keyword>
<gene>
    <name evidence="1" type="primary">smg</name>
    <name type="ordered locus">VF_2540</name>
</gene>
<reference key="1">
    <citation type="journal article" date="2005" name="Proc. Natl. Acad. Sci. U.S.A.">
        <title>Complete genome sequence of Vibrio fischeri: a symbiotic bacterium with pathogenic congeners.</title>
        <authorList>
            <person name="Ruby E.G."/>
            <person name="Urbanowski M."/>
            <person name="Campbell J."/>
            <person name="Dunn A."/>
            <person name="Faini M."/>
            <person name="Gunsalus R."/>
            <person name="Lostroh P."/>
            <person name="Lupp C."/>
            <person name="McCann J."/>
            <person name="Millikan D."/>
            <person name="Schaefer A."/>
            <person name="Stabb E."/>
            <person name="Stevens A."/>
            <person name="Visick K."/>
            <person name="Whistler C."/>
            <person name="Greenberg E.P."/>
        </authorList>
    </citation>
    <scope>NUCLEOTIDE SEQUENCE [LARGE SCALE GENOMIC DNA]</scope>
    <source>
        <strain>ATCC 700601 / ES114</strain>
    </source>
</reference>